<proteinExistence type="inferred from homology"/>
<keyword id="KW-0012">Acyltransferase</keyword>
<keyword id="KW-0963">Cytoplasm</keyword>
<keyword id="KW-0808">Transferase</keyword>
<accession>B2UFW5</accession>
<dbReference type="EC" id="2.3.2.29" evidence="1"/>
<dbReference type="EMBL" id="CP001068">
    <property type="protein sequence ID" value="ACD27066.1"/>
    <property type="molecule type" value="Genomic_DNA"/>
</dbReference>
<dbReference type="SMR" id="B2UFW5"/>
<dbReference type="STRING" id="402626.Rpic_1931"/>
<dbReference type="KEGG" id="rpi:Rpic_1931"/>
<dbReference type="PATRIC" id="fig|402626.5.peg.3083"/>
<dbReference type="eggNOG" id="COG2935">
    <property type="taxonomic scope" value="Bacteria"/>
</dbReference>
<dbReference type="HOGENOM" id="CLU_077607_0_0_4"/>
<dbReference type="GO" id="GO:0005737">
    <property type="term" value="C:cytoplasm"/>
    <property type="evidence" value="ECO:0007669"/>
    <property type="project" value="UniProtKB-SubCell"/>
</dbReference>
<dbReference type="GO" id="GO:0004057">
    <property type="term" value="F:arginyl-tRNA--protein transferase activity"/>
    <property type="evidence" value="ECO:0007669"/>
    <property type="project" value="InterPro"/>
</dbReference>
<dbReference type="GO" id="GO:0008914">
    <property type="term" value="F:leucyl-tRNA--protein transferase activity"/>
    <property type="evidence" value="ECO:0007669"/>
    <property type="project" value="UniProtKB-UniRule"/>
</dbReference>
<dbReference type="GO" id="GO:0071596">
    <property type="term" value="P:ubiquitin-dependent protein catabolic process via the N-end rule pathway"/>
    <property type="evidence" value="ECO:0007669"/>
    <property type="project" value="InterPro"/>
</dbReference>
<dbReference type="HAMAP" id="MF_00689">
    <property type="entry name" value="Bpt"/>
    <property type="match status" value="1"/>
</dbReference>
<dbReference type="InterPro" id="IPR016181">
    <property type="entry name" value="Acyl_CoA_acyltransferase"/>
</dbReference>
<dbReference type="InterPro" id="IPR017138">
    <property type="entry name" value="Asp_Glu_LeuTrfase"/>
</dbReference>
<dbReference type="InterPro" id="IPR030700">
    <property type="entry name" value="N-end_Aminoacyl_Trfase"/>
</dbReference>
<dbReference type="InterPro" id="IPR007472">
    <property type="entry name" value="N-end_Aminoacyl_Trfase_C"/>
</dbReference>
<dbReference type="InterPro" id="IPR007471">
    <property type="entry name" value="N-end_Aminoacyl_Trfase_N"/>
</dbReference>
<dbReference type="NCBIfam" id="NF002341">
    <property type="entry name" value="PRK01305.1-1"/>
    <property type="match status" value="1"/>
</dbReference>
<dbReference type="NCBIfam" id="NF002342">
    <property type="entry name" value="PRK01305.1-3"/>
    <property type="match status" value="1"/>
</dbReference>
<dbReference type="NCBIfam" id="NF002346">
    <property type="entry name" value="PRK01305.2-3"/>
    <property type="match status" value="1"/>
</dbReference>
<dbReference type="PANTHER" id="PTHR21367">
    <property type="entry name" value="ARGININE-TRNA-PROTEIN TRANSFERASE 1"/>
    <property type="match status" value="1"/>
</dbReference>
<dbReference type="PANTHER" id="PTHR21367:SF1">
    <property type="entry name" value="ARGINYL-TRNA--PROTEIN TRANSFERASE 1"/>
    <property type="match status" value="1"/>
</dbReference>
<dbReference type="Pfam" id="PF04377">
    <property type="entry name" value="ATE_C"/>
    <property type="match status" value="1"/>
</dbReference>
<dbReference type="Pfam" id="PF04376">
    <property type="entry name" value="ATE_N"/>
    <property type="match status" value="1"/>
</dbReference>
<dbReference type="PIRSF" id="PIRSF037208">
    <property type="entry name" value="ATE_pro_prd"/>
    <property type="match status" value="1"/>
</dbReference>
<dbReference type="SUPFAM" id="SSF55729">
    <property type="entry name" value="Acyl-CoA N-acyltransferases (Nat)"/>
    <property type="match status" value="1"/>
</dbReference>
<reference key="1">
    <citation type="submission" date="2008-05" db="EMBL/GenBank/DDBJ databases">
        <title>Complete sequence of chromosome 1 of Ralstonia pickettii 12J.</title>
        <authorList>
            <person name="Lucas S."/>
            <person name="Copeland A."/>
            <person name="Lapidus A."/>
            <person name="Glavina del Rio T."/>
            <person name="Dalin E."/>
            <person name="Tice H."/>
            <person name="Bruce D."/>
            <person name="Goodwin L."/>
            <person name="Pitluck S."/>
            <person name="Meincke L."/>
            <person name="Brettin T."/>
            <person name="Detter J.C."/>
            <person name="Han C."/>
            <person name="Kuske C.R."/>
            <person name="Schmutz J."/>
            <person name="Larimer F."/>
            <person name="Land M."/>
            <person name="Hauser L."/>
            <person name="Kyrpides N."/>
            <person name="Mikhailova N."/>
            <person name="Marsh T."/>
            <person name="Richardson P."/>
        </authorList>
    </citation>
    <scope>NUCLEOTIDE SEQUENCE [LARGE SCALE GENOMIC DNA]</scope>
    <source>
        <strain>12J</strain>
    </source>
</reference>
<protein>
    <recommendedName>
        <fullName evidence="1">Aspartate/glutamate leucyltransferase</fullName>
        <ecNumber evidence="1">2.3.2.29</ecNumber>
    </recommendedName>
</protein>
<gene>
    <name evidence="1" type="primary">bpt</name>
    <name type="ordered locus">Rpic_1931</name>
</gene>
<feature type="chain" id="PRO_1000131993" description="Aspartate/glutamate leucyltransferase">
    <location>
        <begin position="1"/>
        <end position="255"/>
    </location>
</feature>
<name>BPT_RALPJ</name>
<organism>
    <name type="scientific">Ralstonia pickettii (strain 12J)</name>
    <dbReference type="NCBI Taxonomy" id="402626"/>
    <lineage>
        <taxon>Bacteria</taxon>
        <taxon>Pseudomonadati</taxon>
        <taxon>Pseudomonadota</taxon>
        <taxon>Betaproteobacteria</taxon>
        <taxon>Burkholderiales</taxon>
        <taxon>Burkholderiaceae</taxon>
        <taxon>Ralstonia</taxon>
    </lineage>
</organism>
<sequence length="255" mass="29335">MSKLKELPLSALQFYATAPYACSYLDGRLARSQVATPAHLINADVYSKLVRAGFRRSGIFTYRPHCDDCHACTPCRVVVDQYSPSRAQRRAAERHQGLEALVAPLTYVEEHYQLYLLYQSVRHAGGGMDHDSRDQYEQFLLQSRVNSRLVEFREPPESPSAGKLRMVSMIDVLEDGLSSVYTFYDPIEQKASYGTYNVLWQIAQAQALDLPYVYLGYWIEQSRKMAYKALFQPLELLVNGEWRRFEDVVPRTTEE</sequence>
<comment type="function">
    <text evidence="1">Functions in the N-end rule pathway of protein degradation where it conjugates Leu from its aminoacyl-tRNA to the N-termini of proteins containing an N-terminal aspartate or glutamate.</text>
</comment>
<comment type="catalytic activity">
    <reaction evidence="1">
        <text>N-terminal L-glutamyl-[protein] + L-leucyl-tRNA(Leu) = N-terminal L-leucyl-L-glutamyl-[protein] + tRNA(Leu) + H(+)</text>
        <dbReference type="Rhea" id="RHEA:50412"/>
        <dbReference type="Rhea" id="RHEA-COMP:9613"/>
        <dbReference type="Rhea" id="RHEA-COMP:9622"/>
        <dbReference type="Rhea" id="RHEA-COMP:12664"/>
        <dbReference type="Rhea" id="RHEA-COMP:12668"/>
        <dbReference type="ChEBI" id="CHEBI:15378"/>
        <dbReference type="ChEBI" id="CHEBI:64721"/>
        <dbReference type="ChEBI" id="CHEBI:78442"/>
        <dbReference type="ChEBI" id="CHEBI:78494"/>
        <dbReference type="ChEBI" id="CHEBI:133041"/>
        <dbReference type="EC" id="2.3.2.29"/>
    </reaction>
</comment>
<comment type="catalytic activity">
    <reaction evidence="1">
        <text>N-terminal L-aspartyl-[protein] + L-leucyl-tRNA(Leu) = N-terminal L-leucyl-L-aspartyl-[protein] + tRNA(Leu) + H(+)</text>
        <dbReference type="Rhea" id="RHEA:50420"/>
        <dbReference type="Rhea" id="RHEA-COMP:9613"/>
        <dbReference type="Rhea" id="RHEA-COMP:9622"/>
        <dbReference type="Rhea" id="RHEA-COMP:12669"/>
        <dbReference type="Rhea" id="RHEA-COMP:12674"/>
        <dbReference type="ChEBI" id="CHEBI:15378"/>
        <dbReference type="ChEBI" id="CHEBI:64720"/>
        <dbReference type="ChEBI" id="CHEBI:78442"/>
        <dbReference type="ChEBI" id="CHEBI:78494"/>
        <dbReference type="ChEBI" id="CHEBI:133042"/>
        <dbReference type="EC" id="2.3.2.29"/>
    </reaction>
</comment>
<comment type="subcellular location">
    <subcellularLocation>
        <location evidence="1">Cytoplasm</location>
    </subcellularLocation>
</comment>
<comment type="similarity">
    <text evidence="1">Belongs to the R-transferase family. Bpt subfamily.</text>
</comment>
<evidence type="ECO:0000255" key="1">
    <source>
        <dbReference type="HAMAP-Rule" id="MF_00689"/>
    </source>
</evidence>